<gene>
    <name type="ordered locus">Gmet_3206</name>
</gene>
<name>Y3206_GEOMG</name>
<keyword id="KW-0547">Nucleotide-binding</keyword>
<keyword id="KW-1185">Reference proteome</keyword>
<dbReference type="EMBL" id="CP000148">
    <property type="protein sequence ID" value="ABB33419.1"/>
    <property type="molecule type" value="Genomic_DNA"/>
</dbReference>
<dbReference type="RefSeq" id="WP_004512644.1">
    <property type="nucleotide sequence ID" value="NC_007517.1"/>
</dbReference>
<dbReference type="SMR" id="Q39QQ5"/>
<dbReference type="STRING" id="269799.Gmet_3206"/>
<dbReference type="KEGG" id="gme:Gmet_3206"/>
<dbReference type="eggNOG" id="COG1666">
    <property type="taxonomic scope" value="Bacteria"/>
</dbReference>
<dbReference type="HOGENOM" id="CLU_099839_1_0_7"/>
<dbReference type="Proteomes" id="UP000007073">
    <property type="component" value="Chromosome"/>
</dbReference>
<dbReference type="GO" id="GO:0005829">
    <property type="term" value="C:cytosol"/>
    <property type="evidence" value="ECO:0007669"/>
    <property type="project" value="TreeGrafter"/>
</dbReference>
<dbReference type="GO" id="GO:0000166">
    <property type="term" value="F:nucleotide binding"/>
    <property type="evidence" value="ECO:0007669"/>
    <property type="project" value="TreeGrafter"/>
</dbReference>
<dbReference type="CDD" id="cd11740">
    <property type="entry name" value="YajQ_like"/>
    <property type="match status" value="1"/>
</dbReference>
<dbReference type="Gene3D" id="3.30.70.860">
    <property type="match status" value="1"/>
</dbReference>
<dbReference type="Gene3D" id="3.30.70.990">
    <property type="entry name" value="YajQ-like, domain 2"/>
    <property type="match status" value="1"/>
</dbReference>
<dbReference type="HAMAP" id="MF_00632">
    <property type="entry name" value="YajQ"/>
    <property type="match status" value="1"/>
</dbReference>
<dbReference type="InterPro" id="IPR007551">
    <property type="entry name" value="DUF520"/>
</dbReference>
<dbReference type="InterPro" id="IPR035571">
    <property type="entry name" value="UPF0234-like_C"/>
</dbReference>
<dbReference type="InterPro" id="IPR035570">
    <property type="entry name" value="UPF0234_N"/>
</dbReference>
<dbReference type="InterPro" id="IPR036183">
    <property type="entry name" value="YajQ-like_sf"/>
</dbReference>
<dbReference type="NCBIfam" id="NF003819">
    <property type="entry name" value="PRK05412.1"/>
    <property type="match status" value="1"/>
</dbReference>
<dbReference type="PANTHER" id="PTHR30476">
    <property type="entry name" value="UPF0234 PROTEIN YAJQ"/>
    <property type="match status" value="1"/>
</dbReference>
<dbReference type="PANTHER" id="PTHR30476:SF0">
    <property type="entry name" value="UPF0234 PROTEIN YAJQ"/>
    <property type="match status" value="1"/>
</dbReference>
<dbReference type="Pfam" id="PF04461">
    <property type="entry name" value="DUF520"/>
    <property type="match status" value="1"/>
</dbReference>
<dbReference type="SUPFAM" id="SSF89963">
    <property type="entry name" value="YajQ-like"/>
    <property type="match status" value="2"/>
</dbReference>
<accession>Q39QQ5</accession>
<organism>
    <name type="scientific">Geobacter metallireducens (strain ATCC 53774 / DSM 7210 / GS-15)</name>
    <dbReference type="NCBI Taxonomy" id="269799"/>
    <lineage>
        <taxon>Bacteria</taxon>
        <taxon>Pseudomonadati</taxon>
        <taxon>Thermodesulfobacteriota</taxon>
        <taxon>Desulfuromonadia</taxon>
        <taxon>Geobacterales</taxon>
        <taxon>Geobacteraceae</taxon>
        <taxon>Geobacter</taxon>
    </lineage>
</organism>
<reference key="1">
    <citation type="journal article" date="2009" name="BMC Microbiol.">
        <title>The genome sequence of Geobacter metallireducens: features of metabolism, physiology and regulation common and dissimilar to Geobacter sulfurreducens.</title>
        <authorList>
            <person name="Aklujkar M."/>
            <person name="Krushkal J."/>
            <person name="DiBartolo G."/>
            <person name="Lapidus A."/>
            <person name="Land M.L."/>
            <person name="Lovley D.R."/>
        </authorList>
    </citation>
    <scope>NUCLEOTIDE SEQUENCE [LARGE SCALE GENOMIC DNA]</scope>
    <source>
        <strain>ATCC 53774 / DSM 7210 / GS-15</strain>
    </source>
</reference>
<proteinExistence type="inferred from homology"/>
<evidence type="ECO:0000255" key="1">
    <source>
        <dbReference type="HAMAP-Rule" id="MF_00632"/>
    </source>
</evidence>
<comment type="function">
    <text evidence="1">Nucleotide-binding protein.</text>
</comment>
<comment type="similarity">
    <text evidence="1">Belongs to the YajQ family.</text>
</comment>
<sequence>MPSFDIVSKVDMQEVDNAVNQAVKEIGQRYDFKGSKSEVTLEKDAIKILADDDFRLKAIVDILQSKFIKRGISPKALQYGKAETASGGMVRQIITVQQGISKEKGKEVVAVIKDTKLKVQGQIQDDQVRVTGKNRDDLQEAIRTLKGKDLGIELQFVNFRD</sequence>
<feature type="chain" id="PRO_0000261939" description="Nucleotide-binding protein Gmet_3206">
    <location>
        <begin position="1"/>
        <end position="161"/>
    </location>
</feature>
<protein>
    <recommendedName>
        <fullName evidence="1">Nucleotide-binding protein Gmet_3206</fullName>
    </recommendedName>
</protein>